<dbReference type="EC" id="2.1.3.2" evidence="1"/>
<dbReference type="EMBL" id="CP001173">
    <property type="protein sequence ID" value="ACI27112.1"/>
    <property type="molecule type" value="Genomic_DNA"/>
</dbReference>
<dbReference type="RefSeq" id="WP_001124613.1">
    <property type="nucleotide sequence ID" value="NC_011333.1"/>
</dbReference>
<dbReference type="SMR" id="B5ZAD2"/>
<dbReference type="KEGG" id="hpg:HPG27_346"/>
<dbReference type="HOGENOM" id="CLU_043846_2_0_7"/>
<dbReference type="UniPathway" id="UPA00070">
    <property type="reaction ID" value="UER00116"/>
</dbReference>
<dbReference type="Proteomes" id="UP000001735">
    <property type="component" value="Chromosome"/>
</dbReference>
<dbReference type="GO" id="GO:0005829">
    <property type="term" value="C:cytosol"/>
    <property type="evidence" value="ECO:0007669"/>
    <property type="project" value="TreeGrafter"/>
</dbReference>
<dbReference type="GO" id="GO:0016597">
    <property type="term" value="F:amino acid binding"/>
    <property type="evidence" value="ECO:0007669"/>
    <property type="project" value="InterPro"/>
</dbReference>
<dbReference type="GO" id="GO:0004070">
    <property type="term" value="F:aspartate carbamoyltransferase activity"/>
    <property type="evidence" value="ECO:0007669"/>
    <property type="project" value="UniProtKB-UniRule"/>
</dbReference>
<dbReference type="GO" id="GO:0006207">
    <property type="term" value="P:'de novo' pyrimidine nucleobase biosynthetic process"/>
    <property type="evidence" value="ECO:0007669"/>
    <property type="project" value="InterPro"/>
</dbReference>
<dbReference type="GO" id="GO:0044205">
    <property type="term" value="P:'de novo' UMP biosynthetic process"/>
    <property type="evidence" value="ECO:0007669"/>
    <property type="project" value="UniProtKB-UniRule"/>
</dbReference>
<dbReference type="GO" id="GO:0006520">
    <property type="term" value="P:amino acid metabolic process"/>
    <property type="evidence" value="ECO:0007669"/>
    <property type="project" value="InterPro"/>
</dbReference>
<dbReference type="FunFam" id="3.40.50.1370:FF:000037">
    <property type="entry name" value="Aspartate carbamoyltransferase"/>
    <property type="match status" value="1"/>
</dbReference>
<dbReference type="Gene3D" id="3.40.50.1370">
    <property type="entry name" value="Aspartate/ornithine carbamoyltransferase"/>
    <property type="match status" value="2"/>
</dbReference>
<dbReference type="HAMAP" id="MF_00001">
    <property type="entry name" value="Asp_carb_tr"/>
    <property type="match status" value="1"/>
</dbReference>
<dbReference type="InterPro" id="IPR006132">
    <property type="entry name" value="Asp/Orn_carbamoyltranf_P-bd"/>
</dbReference>
<dbReference type="InterPro" id="IPR006130">
    <property type="entry name" value="Asp/Orn_carbamoylTrfase"/>
</dbReference>
<dbReference type="InterPro" id="IPR036901">
    <property type="entry name" value="Asp/Orn_carbamoylTrfase_sf"/>
</dbReference>
<dbReference type="InterPro" id="IPR002082">
    <property type="entry name" value="Asp_carbamoyltransf"/>
</dbReference>
<dbReference type="InterPro" id="IPR006131">
    <property type="entry name" value="Asp_carbamoyltransf_Asp/Orn-bd"/>
</dbReference>
<dbReference type="NCBIfam" id="TIGR00670">
    <property type="entry name" value="asp_carb_tr"/>
    <property type="match status" value="1"/>
</dbReference>
<dbReference type="NCBIfam" id="NF002032">
    <property type="entry name" value="PRK00856.1"/>
    <property type="match status" value="1"/>
</dbReference>
<dbReference type="PANTHER" id="PTHR45753:SF6">
    <property type="entry name" value="ASPARTATE CARBAMOYLTRANSFERASE"/>
    <property type="match status" value="1"/>
</dbReference>
<dbReference type="PANTHER" id="PTHR45753">
    <property type="entry name" value="ORNITHINE CARBAMOYLTRANSFERASE, MITOCHONDRIAL"/>
    <property type="match status" value="1"/>
</dbReference>
<dbReference type="Pfam" id="PF00185">
    <property type="entry name" value="OTCace"/>
    <property type="match status" value="1"/>
</dbReference>
<dbReference type="Pfam" id="PF02729">
    <property type="entry name" value="OTCace_N"/>
    <property type="match status" value="1"/>
</dbReference>
<dbReference type="PRINTS" id="PR00100">
    <property type="entry name" value="AOTCASE"/>
</dbReference>
<dbReference type="PRINTS" id="PR00101">
    <property type="entry name" value="ATCASE"/>
</dbReference>
<dbReference type="SUPFAM" id="SSF53671">
    <property type="entry name" value="Aspartate/ornithine carbamoyltransferase"/>
    <property type="match status" value="1"/>
</dbReference>
<dbReference type="PROSITE" id="PS00097">
    <property type="entry name" value="CARBAMOYLTRANSFERASE"/>
    <property type="match status" value="1"/>
</dbReference>
<feature type="chain" id="PRO_1000088769" description="Aspartate carbamoyltransferase catalytic subunit">
    <location>
        <begin position="1"/>
        <end position="307"/>
    </location>
</feature>
<feature type="binding site" evidence="1">
    <location>
        <position position="59"/>
    </location>
    <ligand>
        <name>carbamoyl phosphate</name>
        <dbReference type="ChEBI" id="CHEBI:58228"/>
    </ligand>
</feature>
<feature type="binding site" evidence="1">
    <location>
        <position position="60"/>
    </location>
    <ligand>
        <name>carbamoyl phosphate</name>
        <dbReference type="ChEBI" id="CHEBI:58228"/>
    </ligand>
</feature>
<feature type="binding site" evidence="1">
    <location>
        <position position="87"/>
    </location>
    <ligand>
        <name>L-aspartate</name>
        <dbReference type="ChEBI" id="CHEBI:29991"/>
    </ligand>
</feature>
<feature type="binding site" evidence="1">
    <location>
        <position position="109"/>
    </location>
    <ligand>
        <name>carbamoyl phosphate</name>
        <dbReference type="ChEBI" id="CHEBI:58228"/>
    </ligand>
</feature>
<feature type="binding site" evidence="1">
    <location>
        <position position="137"/>
    </location>
    <ligand>
        <name>carbamoyl phosphate</name>
        <dbReference type="ChEBI" id="CHEBI:58228"/>
    </ligand>
</feature>
<feature type="binding site" evidence="1">
    <location>
        <position position="140"/>
    </location>
    <ligand>
        <name>carbamoyl phosphate</name>
        <dbReference type="ChEBI" id="CHEBI:58228"/>
    </ligand>
</feature>
<feature type="binding site" evidence="1">
    <location>
        <position position="173"/>
    </location>
    <ligand>
        <name>L-aspartate</name>
        <dbReference type="ChEBI" id="CHEBI:29991"/>
    </ligand>
</feature>
<feature type="binding site" evidence="1">
    <location>
        <position position="223"/>
    </location>
    <ligand>
        <name>L-aspartate</name>
        <dbReference type="ChEBI" id="CHEBI:29991"/>
    </ligand>
</feature>
<feature type="binding site" evidence="1">
    <location>
        <position position="266"/>
    </location>
    <ligand>
        <name>carbamoyl phosphate</name>
        <dbReference type="ChEBI" id="CHEBI:58228"/>
    </ligand>
</feature>
<feature type="binding site" evidence="1">
    <location>
        <position position="267"/>
    </location>
    <ligand>
        <name>carbamoyl phosphate</name>
        <dbReference type="ChEBI" id="CHEBI:58228"/>
    </ligand>
</feature>
<reference key="1">
    <citation type="journal article" date="2009" name="J. Bacteriol.">
        <title>The complete genome sequence of Helicobacter pylori strain G27.</title>
        <authorList>
            <person name="Baltrus D.A."/>
            <person name="Amieva M.R."/>
            <person name="Covacci A."/>
            <person name="Lowe T.M."/>
            <person name="Merrell D.S."/>
            <person name="Ottemann K.M."/>
            <person name="Stein M."/>
            <person name="Salama N.R."/>
            <person name="Guillemin K."/>
        </authorList>
    </citation>
    <scope>NUCLEOTIDE SEQUENCE [LARGE SCALE GENOMIC DNA]</scope>
    <source>
        <strain>G27</strain>
    </source>
</reference>
<sequence length="307" mass="34127">MPKKCRHLLQTSDLSLDEIKLLLNKASVYANDFNAVSLETKEKMHNKIIVALFFENSTRTVSSFEIASLRLGAKIVKLNMQTSSTSKGETLIDTFKNIHAMQPDAIITRHAFSSAPFKLAEFSQCPLINAGSGMSAHPTQALLDLLTLYQHFGGLENLKGKKIAFIGDVKNSRVANSNIKLLQRLGLEIMLCAPSSMLPSTPLRTTHNIEEAIAFADILMSLRTQTERHNAPIFASLKDYGNTYCITQKRLSTHAKNKEIIILHPGPVHRDIDIESAVLEDKRSKVLEQVKNGVAMRMAVLEFLLSD</sequence>
<proteinExistence type="inferred from homology"/>
<keyword id="KW-0665">Pyrimidine biosynthesis</keyword>
<keyword id="KW-1185">Reference proteome</keyword>
<keyword id="KW-0808">Transferase</keyword>
<gene>
    <name evidence="1" type="primary">pyrB</name>
    <name type="ordered locus">HPG27_346</name>
</gene>
<comment type="function">
    <text evidence="1">Catalyzes the condensation of carbamoyl phosphate and aspartate to form carbamoyl aspartate and inorganic phosphate, the committed step in the de novo pyrimidine nucleotide biosynthesis pathway.</text>
</comment>
<comment type="catalytic activity">
    <reaction evidence="1">
        <text>carbamoyl phosphate + L-aspartate = N-carbamoyl-L-aspartate + phosphate + H(+)</text>
        <dbReference type="Rhea" id="RHEA:20013"/>
        <dbReference type="ChEBI" id="CHEBI:15378"/>
        <dbReference type="ChEBI" id="CHEBI:29991"/>
        <dbReference type="ChEBI" id="CHEBI:32814"/>
        <dbReference type="ChEBI" id="CHEBI:43474"/>
        <dbReference type="ChEBI" id="CHEBI:58228"/>
        <dbReference type="EC" id="2.1.3.2"/>
    </reaction>
</comment>
<comment type="pathway">
    <text evidence="1">Pyrimidine metabolism; UMP biosynthesis via de novo pathway; (S)-dihydroorotate from bicarbonate: step 2/3.</text>
</comment>
<comment type="subunit">
    <text evidence="1">Heterododecamer (2C3:3R2) of six catalytic PyrB chains organized as two trimers (C3), and six regulatory PyrI chains organized as three dimers (R2).</text>
</comment>
<comment type="similarity">
    <text evidence="1">Belongs to the aspartate/ornithine carbamoyltransferase superfamily. ATCase family.</text>
</comment>
<evidence type="ECO:0000255" key="1">
    <source>
        <dbReference type="HAMAP-Rule" id="MF_00001"/>
    </source>
</evidence>
<organism>
    <name type="scientific">Helicobacter pylori (strain G27)</name>
    <dbReference type="NCBI Taxonomy" id="563041"/>
    <lineage>
        <taxon>Bacteria</taxon>
        <taxon>Pseudomonadati</taxon>
        <taxon>Campylobacterota</taxon>
        <taxon>Epsilonproteobacteria</taxon>
        <taxon>Campylobacterales</taxon>
        <taxon>Helicobacteraceae</taxon>
        <taxon>Helicobacter</taxon>
    </lineage>
</organism>
<protein>
    <recommendedName>
        <fullName evidence="1">Aspartate carbamoyltransferase catalytic subunit</fullName>
        <ecNumber evidence="1">2.1.3.2</ecNumber>
    </recommendedName>
    <alternativeName>
        <fullName evidence="1">Aspartate transcarbamylase</fullName>
        <shortName evidence="1">ATCase</shortName>
    </alternativeName>
</protein>
<name>PYRB_HELPG</name>
<accession>B5ZAD2</accession>